<sequence>MLAINLNLTVAFMLALTGVLVYRSHLMSTLLCLEGMMLSLFILMTLLIVHFHMFSMSMAPLILLVFSACEAGVGLALLVKISSTHGNDYVQNLNLLQC</sequence>
<geneLocation type="mitochondrion"/>
<comment type="function">
    <text evidence="1">Core subunit of the mitochondrial membrane respiratory chain NADH dehydrogenase (Complex I) which catalyzes electron transfer from NADH through the respiratory chain, using ubiquinone as an electron acceptor. Part of the enzyme membrane arm which is embedded in the lipid bilayer and involved in proton translocation.</text>
</comment>
<comment type="catalytic activity">
    <reaction evidence="1">
        <text>a ubiquinone + NADH + 5 H(+)(in) = a ubiquinol + NAD(+) + 4 H(+)(out)</text>
        <dbReference type="Rhea" id="RHEA:29091"/>
        <dbReference type="Rhea" id="RHEA-COMP:9565"/>
        <dbReference type="Rhea" id="RHEA-COMP:9566"/>
        <dbReference type="ChEBI" id="CHEBI:15378"/>
        <dbReference type="ChEBI" id="CHEBI:16389"/>
        <dbReference type="ChEBI" id="CHEBI:17976"/>
        <dbReference type="ChEBI" id="CHEBI:57540"/>
        <dbReference type="ChEBI" id="CHEBI:57945"/>
        <dbReference type="EC" id="7.1.1.2"/>
    </reaction>
    <physiologicalReaction direction="left-to-right" evidence="1">
        <dbReference type="Rhea" id="RHEA:29092"/>
    </physiologicalReaction>
</comment>
<comment type="subunit">
    <text evidence="2">Core subunit of respiratory chain NADH dehydrogenase (Complex I) which is composed of 45 different subunits.</text>
</comment>
<comment type="subcellular location">
    <subcellularLocation>
        <location evidence="2">Mitochondrion inner membrane</location>
        <topology evidence="3">Multi-pass membrane protein</topology>
    </subcellularLocation>
</comment>
<comment type="similarity">
    <text evidence="4">Belongs to the complex I subunit 4L family.</text>
</comment>
<name>NU4LM_DASHA</name>
<proteinExistence type="inferred from homology"/>
<dbReference type="EC" id="7.1.1.2"/>
<dbReference type="EMBL" id="AY795973">
    <property type="protein sequence ID" value="AAV50064.1"/>
    <property type="molecule type" value="Genomic_DNA"/>
</dbReference>
<dbReference type="RefSeq" id="YP_423970.1">
    <property type="nucleotide sequence ID" value="NC_007630.1"/>
</dbReference>
<dbReference type="SMR" id="Q32UT4"/>
<dbReference type="GeneID" id="3802053"/>
<dbReference type="CTD" id="4539"/>
<dbReference type="GO" id="GO:0005743">
    <property type="term" value="C:mitochondrial inner membrane"/>
    <property type="evidence" value="ECO:0000250"/>
    <property type="project" value="UniProtKB"/>
</dbReference>
<dbReference type="GO" id="GO:0045271">
    <property type="term" value="C:respiratory chain complex I"/>
    <property type="evidence" value="ECO:0000250"/>
    <property type="project" value="UniProtKB"/>
</dbReference>
<dbReference type="GO" id="GO:0008137">
    <property type="term" value="F:NADH dehydrogenase (ubiquinone) activity"/>
    <property type="evidence" value="ECO:0000250"/>
    <property type="project" value="UniProtKB"/>
</dbReference>
<dbReference type="GO" id="GO:0042773">
    <property type="term" value="P:ATP synthesis coupled electron transport"/>
    <property type="evidence" value="ECO:0007669"/>
    <property type="project" value="InterPro"/>
</dbReference>
<dbReference type="FunFam" id="1.10.287.3510:FF:000002">
    <property type="entry name" value="NADH-ubiquinone oxidoreductase chain 4L"/>
    <property type="match status" value="1"/>
</dbReference>
<dbReference type="Gene3D" id="1.10.287.3510">
    <property type="match status" value="1"/>
</dbReference>
<dbReference type="InterPro" id="IPR001133">
    <property type="entry name" value="NADH_UbQ_OxRdtase_chain4L/K"/>
</dbReference>
<dbReference type="InterPro" id="IPR039428">
    <property type="entry name" value="NUOK/Mnh_C1-like"/>
</dbReference>
<dbReference type="PANTHER" id="PTHR11434:SF0">
    <property type="entry name" value="NADH-UBIQUINONE OXIDOREDUCTASE CHAIN 4L"/>
    <property type="match status" value="1"/>
</dbReference>
<dbReference type="PANTHER" id="PTHR11434">
    <property type="entry name" value="NADH-UBIQUINONE OXIDOREDUCTASE SUBUNIT ND4L"/>
    <property type="match status" value="1"/>
</dbReference>
<dbReference type="Pfam" id="PF00420">
    <property type="entry name" value="Oxidored_q2"/>
    <property type="match status" value="1"/>
</dbReference>
<reference key="1">
    <citation type="journal article" date="2006" name="Syst. Biol.">
        <title>Combined mitochondrial and nuclear DNA sequences resolve the interrelations of the major Australasian marsupial radiations.</title>
        <authorList>
            <person name="Phillips M.J."/>
            <person name="McLenachan P.A."/>
            <person name="Down C."/>
            <person name="Gibb G.C."/>
            <person name="Penny D."/>
        </authorList>
    </citation>
    <scope>NUCLEOTIDE SEQUENCE [GENOMIC DNA]</scope>
</reference>
<gene>
    <name type="primary">MT-ND4L</name>
    <name type="synonym">MTND4L</name>
    <name type="synonym">NADH4L</name>
    <name type="synonym">ND4L</name>
</gene>
<protein>
    <recommendedName>
        <fullName>NADH-ubiquinone oxidoreductase chain 4L</fullName>
        <ecNumber>7.1.1.2</ecNumber>
    </recommendedName>
    <alternativeName>
        <fullName>NADH dehydrogenase subunit 4L</fullName>
    </alternativeName>
</protein>
<feature type="chain" id="PRO_0000275005" description="NADH-ubiquinone oxidoreductase chain 4L">
    <location>
        <begin position="1"/>
        <end position="98"/>
    </location>
</feature>
<feature type="transmembrane region" description="Helical" evidence="3">
    <location>
        <begin position="1"/>
        <end position="21"/>
    </location>
</feature>
<feature type="transmembrane region" description="Helical" evidence="3">
    <location>
        <begin position="25"/>
        <end position="45"/>
    </location>
</feature>
<feature type="transmembrane region" description="Helical" evidence="3">
    <location>
        <begin position="57"/>
        <end position="79"/>
    </location>
</feature>
<keyword id="KW-0249">Electron transport</keyword>
<keyword id="KW-0472">Membrane</keyword>
<keyword id="KW-0496">Mitochondrion</keyword>
<keyword id="KW-0999">Mitochondrion inner membrane</keyword>
<keyword id="KW-0520">NAD</keyword>
<keyword id="KW-0679">Respiratory chain</keyword>
<keyword id="KW-1278">Translocase</keyword>
<keyword id="KW-0812">Transmembrane</keyword>
<keyword id="KW-1133">Transmembrane helix</keyword>
<keyword id="KW-0813">Transport</keyword>
<keyword id="KW-0830">Ubiquinone</keyword>
<organism>
    <name type="scientific">Dasyurus hallucatus</name>
    <name type="common">Northern quoll</name>
    <name type="synonym">Satanellus hallucatus</name>
    <dbReference type="NCBI Taxonomy" id="9280"/>
    <lineage>
        <taxon>Eukaryota</taxon>
        <taxon>Metazoa</taxon>
        <taxon>Chordata</taxon>
        <taxon>Craniata</taxon>
        <taxon>Vertebrata</taxon>
        <taxon>Euteleostomi</taxon>
        <taxon>Mammalia</taxon>
        <taxon>Metatheria</taxon>
        <taxon>Dasyuromorphia</taxon>
        <taxon>Dasyuridae</taxon>
        <taxon>Dasyurus</taxon>
    </lineage>
</organism>
<evidence type="ECO:0000250" key="1">
    <source>
        <dbReference type="UniProtKB" id="P03901"/>
    </source>
</evidence>
<evidence type="ECO:0000250" key="2">
    <source>
        <dbReference type="UniProtKB" id="P03902"/>
    </source>
</evidence>
<evidence type="ECO:0000255" key="3"/>
<evidence type="ECO:0000305" key="4"/>
<accession>Q32UT4</accession>